<evidence type="ECO:0000255" key="1">
    <source>
        <dbReference type="HAMAP-Rule" id="MF_00240"/>
    </source>
</evidence>
<protein>
    <recommendedName>
        <fullName evidence="1">Outer-membrane lipoprotein carrier protein</fullName>
    </recommendedName>
</protein>
<sequence>MKKLLCAVLLSPLLYSNAVLADDAKQLRETLNGTESLKADFKQTVTDINKKVIQTGAGVFALAHPNQFYWHLTAPDESQIVADGKDLWIYNPFAEEVVIMDFAEAINASPIALLVHRDDATWSQYSVTKKQDCYEIKPKSTDAGITSVNVCFNNGTLNKFNVLDDKGNLSQFDLSNQHSISAADKSLFKFVLPENVDVDDQRLKTQ</sequence>
<gene>
    <name evidence="1" type="primary">lolA</name>
    <name type="ordered locus">Shewmr7_2012</name>
</gene>
<feature type="signal peptide" evidence="1">
    <location>
        <begin position="1"/>
        <end position="21"/>
    </location>
</feature>
<feature type="chain" id="PRO_5000128854" description="Outer-membrane lipoprotein carrier protein">
    <location>
        <begin position="22"/>
        <end position="206"/>
    </location>
</feature>
<accession>Q0HV54</accession>
<dbReference type="EMBL" id="CP000444">
    <property type="protein sequence ID" value="ABI43001.1"/>
    <property type="molecule type" value="Genomic_DNA"/>
</dbReference>
<dbReference type="SMR" id="Q0HV54"/>
<dbReference type="KEGG" id="shm:Shewmr7_2012"/>
<dbReference type="HOGENOM" id="CLU_087560_1_1_6"/>
<dbReference type="GO" id="GO:0030288">
    <property type="term" value="C:outer membrane-bounded periplasmic space"/>
    <property type="evidence" value="ECO:0007669"/>
    <property type="project" value="TreeGrafter"/>
</dbReference>
<dbReference type="GO" id="GO:0044874">
    <property type="term" value="P:lipoprotein localization to outer membrane"/>
    <property type="evidence" value="ECO:0007669"/>
    <property type="project" value="UniProtKB-UniRule"/>
</dbReference>
<dbReference type="GO" id="GO:0042953">
    <property type="term" value="P:lipoprotein transport"/>
    <property type="evidence" value="ECO:0007669"/>
    <property type="project" value="InterPro"/>
</dbReference>
<dbReference type="CDD" id="cd16325">
    <property type="entry name" value="LolA"/>
    <property type="match status" value="1"/>
</dbReference>
<dbReference type="FunFam" id="2.50.20.10:FF:000016">
    <property type="entry name" value="Outer-membrane lipoprotein carrier protein"/>
    <property type="match status" value="1"/>
</dbReference>
<dbReference type="Gene3D" id="2.50.20.10">
    <property type="entry name" value="Lipoprotein localisation LolA/LolB/LppX"/>
    <property type="match status" value="1"/>
</dbReference>
<dbReference type="HAMAP" id="MF_00240">
    <property type="entry name" value="LolA"/>
    <property type="match status" value="1"/>
</dbReference>
<dbReference type="InterPro" id="IPR029046">
    <property type="entry name" value="LolA/LolB/LppX"/>
</dbReference>
<dbReference type="InterPro" id="IPR004564">
    <property type="entry name" value="OM_lipoprot_carrier_LolA-like"/>
</dbReference>
<dbReference type="InterPro" id="IPR018323">
    <property type="entry name" value="OM_lipoprot_carrier_LolA_Pbac"/>
</dbReference>
<dbReference type="NCBIfam" id="TIGR00547">
    <property type="entry name" value="lolA"/>
    <property type="match status" value="1"/>
</dbReference>
<dbReference type="PANTHER" id="PTHR35869">
    <property type="entry name" value="OUTER-MEMBRANE LIPOPROTEIN CARRIER PROTEIN"/>
    <property type="match status" value="1"/>
</dbReference>
<dbReference type="PANTHER" id="PTHR35869:SF1">
    <property type="entry name" value="OUTER-MEMBRANE LIPOPROTEIN CARRIER PROTEIN"/>
    <property type="match status" value="1"/>
</dbReference>
<dbReference type="Pfam" id="PF03548">
    <property type="entry name" value="LolA"/>
    <property type="match status" value="1"/>
</dbReference>
<dbReference type="SUPFAM" id="SSF89392">
    <property type="entry name" value="Prokaryotic lipoproteins and lipoprotein localization factors"/>
    <property type="match status" value="1"/>
</dbReference>
<comment type="function">
    <text evidence="1">Participates in the translocation of lipoproteins from the inner membrane to the outer membrane. Only forms a complex with a lipoprotein if the residue after the N-terminal Cys is not an aspartate (The Asp acts as a targeting signal to indicate that the lipoprotein should stay in the inner membrane).</text>
</comment>
<comment type="subunit">
    <text evidence="1">Monomer.</text>
</comment>
<comment type="subcellular location">
    <subcellularLocation>
        <location evidence="1">Periplasm</location>
    </subcellularLocation>
</comment>
<comment type="similarity">
    <text evidence="1">Belongs to the LolA family.</text>
</comment>
<organism>
    <name type="scientific">Shewanella sp. (strain MR-7)</name>
    <dbReference type="NCBI Taxonomy" id="60481"/>
    <lineage>
        <taxon>Bacteria</taxon>
        <taxon>Pseudomonadati</taxon>
        <taxon>Pseudomonadota</taxon>
        <taxon>Gammaproteobacteria</taxon>
        <taxon>Alteromonadales</taxon>
        <taxon>Shewanellaceae</taxon>
        <taxon>Shewanella</taxon>
    </lineage>
</organism>
<keyword id="KW-0143">Chaperone</keyword>
<keyword id="KW-0574">Periplasm</keyword>
<keyword id="KW-0653">Protein transport</keyword>
<keyword id="KW-0732">Signal</keyword>
<keyword id="KW-0813">Transport</keyword>
<name>LOLA_SHESR</name>
<proteinExistence type="inferred from homology"/>
<reference key="1">
    <citation type="submission" date="2006-08" db="EMBL/GenBank/DDBJ databases">
        <title>Complete sequence of chromosome 1 of Shewanella sp. MR-7.</title>
        <authorList>
            <person name="Copeland A."/>
            <person name="Lucas S."/>
            <person name="Lapidus A."/>
            <person name="Barry K."/>
            <person name="Detter J.C."/>
            <person name="Glavina del Rio T."/>
            <person name="Hammon N."/>
            <person name="Israni S."/>
            <person name="Dalin E."/>
            <person name="Tice H."/>
            <person name="Pitluck S."/>
            <person name="Kiss H."/>
            <person name="Brettin T."/>
            <person name="Bruce D."/>
            <person name="Han C."/>
            <person name="Tapia R."/>
            <person name="Gilna P."/>
            <person name="Schmutz J."/>
            <person name="Larimer F."/>
            <person name="Land M."/>
            <person name="Hauser L."/>
            <person name="Kyrpides N."/>
            <person name="Mikhailova N."/>
            <person name="Nealson K."/>
            <person name="Konstantinidis K."/>
            <person name="Klappenbach J."/>
            <person name="Tiedje J."/>
            <person name="Richardson P."/>
        </authorList>
    </citation>
    <scope>NUCLEOTIDE SEQUENCE [LARGE SCALE GENOMIC DNA]</scope>
    <source>
        <strain>MR-7</strain>
    </source>
</reference>